<comment type="function">
    <text evidence="1">Catalyzes the transfer of a phosphate group to glutamate to form L-glutamate 5-phosphate.</text>
</comment>
<comment type="catalytic activity">
    <reaction evidence="1">
        <text>L-glutamate + ATP = L-glutamyl 5-phosphate + ADP</text>
        <dbReference type="Rhea" id="RHEA:14877"/>
        <dbReference type="ChEBI" id="CHEBI:29985"/>
        <dbReference type="ChEBI" id="CHEBI:30616"/>
        <dbReference type="ChEBI" id="CHEBI:58274"/>
        <dbReference type="ChEBI" id="CHEBI:456216"/>
        <dbReference type="EC" id="2.7.2.11"/>
    </reaction>
</comment>
<comment type="pathway">
    <text evidence="1">Amino-acid biosynthesis; L-proline biosynthesis; L-glutamate 5-semialdehyde from L-glutamate: step 1/2.</text>
</comment>
<comment type="subcellular location">
    <subcellularLocation>
        <location evidence="1">Cytoplasm</location>
    </subcellularLocation>
</comment>
<comment type="similarity">
    <text evidence="1">Belongs to the glutamate 5-kinase family.</text>
</comment>
<organism>
    <name type="scientific">Treponema pallidum subsp. pallidum (strain SS14)</name>
    <dbReference type="NCBI Taxonomy" id="455434"/>
    <lineage>
        <taxon>Bacteria</taxon>
        <taxon>Pseudomonadati</taxon>
        <taxon>Spirochaetota</taxon>
        <taxon>Spirochaetia</taxon>
        <taxon>Spirochaetales</taxon>
        <taxon>Treponemataceae</taxon>
        <taxon>Treponema</taxon>
    </lineage>
</organism>
<reference key="1">
    <citation type="journal article" date="2008" name="BMC Microbiol.">
        <title>Complete genome sequence of Treponema pallidum ssp. pallidum strain SS14 determined with oligonucleotide arrays.</title>
        <authorList>
            <person name="Matejkova P."/>
            <person name="Strouhal M."/>
            <person name="Smajs D."/>
            <person name="Norris S.J."/>
            <person name="Palzkill T."/>
            <person name="Petrosino J.F."/>
            <person name="Sodergren E."/>
            <person name="Norton J.E."/>
            <person name="Singh J."/>
            <person name="Richmond T.A."/>
            <person name="Molla M.N."/>
            <person name="Albert T.J."/>
            <person name="Weinstock G.M."/>
        </authorList>
    </citation>
    <scope>NUCLEOTIDE SEQUENCE [LARGE SCALE GENOMIC DNA]</scope>
    <source>
        <strain>SS14</strain>
    </source>
</reference>
<evidence type="ECO:0000255" key="1">
    <source>
        <dbReference type="HAMAP-Rule" id="MF_00456"/>
    </source>
</evidence>
<sequence length="296" mass="31315">MIRALFAAAKKIVIKIGSNTLAQADGTPDEEFLAECARACAALMRDGKQIVVVSSGAQVAGISALHCLSSPPQGAGLERHESRGVIPGDGASCKQALCAVGQAELISRWRSAFAAHQQCVGQFLCTKEDFTDSDRAAQVRYTLSFLLERRVVPILNENDALCCSDVPSVPADRRVSLSPQKRIGDNDSLSAFVALLWQADLLLLLSDIDGVYDKDPKAHTDAQHVPLVTDVSALVGKTSMGSSNVFGTGGIATKLDAARLVTRAGIPLVLANGRHLDPILSLMRGDARGTLFVPVS</sequence>
<gene>
    <name evidence="1" type="primary">proB</name>
    <name type="ordered locus">TPASS_0351</name>
</gene>
<dbReference type="EC" id="2.7.2.11" evidence="1"/>
<dbReference type="EMBL" id="CP000805">
    <property type="protein sequence ID" value="ACD70777.1"/>
    <property type="molecule type" value="Genomic_DNA"/>
</dbReference>
<dbReference type="RefSeq" id="WP_010881799.1">
    <property type="nucleotide sequence ID" value="NC_021508.1"/>
</dbReference>
<dbReference type="SMR" id="B2S2U8"/>
<dbReference type="GeneID" id="93876130"/>
<dbReference type="KEGG" id="tpp:TPASS_0351"/>
<dbReference type="PATRIC" id="fig|455434.6.peg.351"/>
<dbReference type="UniPathway" id="UPA00098">
    <property type="reaction ID" value="UER00359"/>
</dbReference>
<dbReference type="Proteomes" id="UP000001202">
    <property type="component" value="Chromosome"/>
</dbReference>
<dbReference type="GO" id="GO:0005829">
    <property type="term" value="C:cytosol"/>
    <property type="evidence" value="ECO:0007669"/>
    <property type="project" value="TreeGrafter"/>
</dbReference>
<dbReference type="GO" id="GO:0005524">
    <property type="term" value="F:ATP binding"/>
    <property type="evidence" value="ECO:0007669"/>
    <property type="project" value="UniProtKB-KW"/>
</dbReference>
<dbReference type="GO" id="GO:0004349">
    <property type="term" value="F:glutamate 5-kinase activity"/>
    <property type="evidence" value="ECO:0007669"/>
    <property type="project" value="UniProtKB-UniRule"/>
</dbReference>
<dbReference type="GO" id="GO:0055129">
    <property type="term" value="P:L-proline biosynthetic process"/>
    <property type="evidence" value="ECO:0007669"/>
    <property type="project" value="UniProtKB-UniRule"/>
</dbReference>
<dbReference type="CDD" id="cd04242">
    <property type="entry name" value="AAK_G5K_ProB"/>
    <property type="match status" value="1"/>
</dbReference>
<dbReference type="FunFam" id="3.40.1160.10:FF:000006">
    <property type="entry name" value="Glutamate 5-kinase"/>
    <property type="match status" value="1"/>
</dbReference>
<dbReference type="Gene3D" id="3.40.1160.10">
    <property type="entry name" value="Acetylglutamate kinase-like"/>
    <property type="match status" value="1"/>
</dbReference>
<dbReference type="HAMAP" id="MF_00456">
    <property type="entry name" value="ProB"/>
    <property type="match status" value="1"/>
</dbReference>
<dbReference type="InterPro" id="IPR036393">
    <property type="entry name" value="AceGlu_kinase-like_sf"/>
</dbReference>
<dbReference type="InterPro" id="IPR001048">
    <property type="entry name" value="Asp/Glu/Uridylate_kinase"/>
</dbReference>
<dbReference type="InterPro" id="IPR041739">
    <property type="entry name" value="G5K_ProB"/>
</dbReference>
<dbReference type="InterPro" id="IPR001057">
    <property type="entry name" value="Glu/AcGlu_kinase"/>
</dbReference>
<dbReference type="InterPro" id="IPR011529">
    <property type="entry name" value="Glu_5kinase"/>
</dbReference>
<dbReference type="InterPro" id="IPR005715">
    <property type="entry name" value="Glu_5kinase/COase_Synthase"/>
</dbReference>
<dbReference type="InterPro" id="IPR019797">
    <property type="entry name" value="Glutamate_5-kinase_CS"/>
</dbReference>
<dbReference type="NCBIfam" id="TIGR01027">
    <property type="entry name" value="proB"/>
    <property type="match status" value="1"/>
</dbReference>
<dbReference type="PANTHER" id="PTHR43654">
    <property type="entry name" value="GLUTAMATE 5-KINASE"/>
    <property type="match status" value="1"/>
</dbReference>
<dbReference type="PANTHER" id="PTHR43654:SF1">
    <property type="entry name" value="ISOPENTENYL PHOSPHATE KINASE"/>
    <property type="match status" value="1"/>
</dbReference>
<dbReference type="Pfam" id="PF00696">
    <property type="entry name" value="AA_kinase"/>
    <property type="match status" value="1"/>
</dbReference>
<dbReference type="PIRSF" id="PIRSF000729">
    <property type="entry name" value="GK"/>
    <property type="match status" value="1"/>
</dbReference>
<dbReference type="PRINTS" id="PR00474">
    <property type="entry name" value="GLU5KINASE"/>
</dbReference>
<dbReference type="SUPFAM" id="SSF53633">
    <property type="entry name" value="Carbamate kinase-like"/>
    <property type="match status" value="1"/>
</dbReference>
<dbReference type="PROSITE" id="PS00902">
    <property type="entry name" value="GLUTAMATE_5_KINASE"/>
    <property type="match status" value="1"/>
</dbReference>
<accession>B2S2U8</accession>
<proteinExistence type="inferred from homology"/>
<name>PROB_TREPS</name>
<feature type="chain" id="PRO_1000193714" description="Glutamate 5-kinase">
    <location>
        <begin position="1"/>
        <end position="296"/>
    </location>
</feature>
<feature type="binding site" evidence="1">
    <location>
        <position position="15"/>
    </location>
    <ligand>
        <name>ATP</name>
        <dbReference type="ChEBI" id="CHEBI:30616"/>
    </ligand>
</feature>
<feature type="binding site" evidence="1">
    <location>
        <position position="55"/>
    </location>
    <ligand>
        <name>substrate</name>
    </ligand>
</feature>
<feature type="binding site" evidence="1">
    <location>
        <position position="159"/>
    </location>
    <ligand>
        <name>substrate</name>
    </ligand>
</feature>
<feature type="binding site" evidence="1">
    <location>
        <position position="186"/>
    </location>
    <ligand>
        <name>substrate</name>
    </ligand>
</feature>
<feature type="binding site" evidence="1">
    <location>
        <begin position="206"/>
        <end position="207"/>
    </location>
    <ligand>
        <name>ATP</name>
        <dbReference type="ChEBI" id="CHEBI:30616"/>
    </ligand>
</feature>
<feature type="binding site" evidence="1">
    <location>
        <begin position="248"/>
        <end position="254"/>
    </location>
    <ligand>
        <name>ATP</name>
        <dbReference type="ChEBI" id="CHEBI:30616"/>
    </ligand>
</feature>
<keyword id="KW-0028">Amino-acid biosynthesis</keyword>
<keyword id="KW-0067">ATP-binding</keyword>
<keyword id="KW-0963">Cytoplasm</keyword>
<keyword id="KW-0418">Kinase</keyword>
<keyword id="KW-0547">Nucleotide-binding</keyword>
<keyword id="KW-0641">Proline biosynthesis</keyword>
<keyword id="KW-0808">Transferase</keyword>
<protein>
    <recommendedName>
        <fullName evidence="1">Glutamate 5-kinase</fullName>
        <ecNumber evidence="1">2.7.2.11</ecNumber>
    </recommendedName>
    <alternativeName>
        <fullName evidence="1">Gamma-glutamyl kinase</fullName>
        <shortName evidence="1">GK</shortName>
    </alternativeName>
</protein>